<evidence type="ECO:0000250" key="1"/>
<evidence type="ECO:0000250" key="2">
    <source>
        <dbReference type="UniProtKB" id="P0C8R6"/>
    </source>
</evidence>
<evidence type="ECO:0000269" key="3">
    <source>
    </source>
</evidence>
<evidence type="ECO:0000305" key="4"/>
<name>3L2B_LATCO</name>
<proteinExistence type="evidence at protein level"/>
<protein>
    <recommendedName>
        <fullName>Toxin Lc b</fullName>
    </recommendedName>
</protein>
<keyword id="KW-0008">Acetylcholine receptor inhibiting toxin</keyword>
<keyword id="KW-0903">Direct protein sequencing</keyword>
<keyword id="KW-1015">Disulfide bond</keyword>
<keyword id="KW-0872">Ion channel impairing toxin</keyword>
<keyword id="KW-0528">Neurotoxin</keyword>
<keyword id="KW-0629">Postsynaptic neurotoxin</keyword>
<keyword id="KW-0964">Secreted</keyword>
<keyword id="KW-0800">Toxin</keyword>
<sequence length="69" mass="7583">RICYLAPRDTQICAPGQEICYLKSWDDGTGSIRGNRLEFGCAATCPTVKRGIHIKCCSTDKCNPHPKLA</sequence>
<accession>P0C8R8</accession>
<comment type="function">
    <text evidence="2">Binds with high affinity to muscular nicotinic acetylcholine receptors (nAChRs), whereas it binds with a low affinity to neuronal alpha-7/CHRNA7 nAChRs.</text>
</comment>
<comment type="subcellular location">
    <subcellularLocation>
        <location evidence="3">Secreted</location>
    </subcellularLocation>
</comment>
<comment type="tissue specificity">
    <text evidence="4">Expressed by the venom gland.</text>
</comment>
<comment type="toxic dose">
    <text evidence="3">LD(50) is 0.12 mg/kg by intramuscular injection into mice.</text>
</comment>
<comment type="miscellaneous">
    <text>Has the length of long neurotoxins, but only 4 disulfide bonds, as short neurotoxins.</text>
</comment>
<comment type="similarity">
    <text evidence="4">Belongs to the three-finger toxin family. Long-chain subfamily. Type II alpha-neurotoxin sub-subfamily.</text>
</comment>
<dbReference type="SMR" id="P0C8R8"/>
<dbReference type="GO" id="GO:0005576">
    <property type="term" value="C:extracellular region"/>
    <property type="evidence" value="ECO:0007669"/>
    <property type="project" value="UniProtKB-SubCell"/>
</dbReference>
<dbReference type="GO" id="GO:0030550">
    <property type="term" value="F:acetylcholine receptor inhibitor activity"/>
    <property type="evidence" value="ECO:0007669"/>
    <property type="project" value="UniProtKB-KW"/>
</dbReference>
<dbReference type="GO" id="GO:0099106">
    <property type="term" value="F:ion channel regulator activity"/>
    <property type="evidence" value="ECO:0007669"/>
    <property type="project" value="UniProtKB-KW"/>
</dbReference>
<dbReference type="GO" id="GO:0090729">
    <property type="term" value="F:toxin activity"/>
    <property type="evidence" value="ECO:0007669"/>
    <property type="project" value="UniProtKB-KW"/>
</dbReference>
<dbReference type="CDD" id="cd00206">
    <property type="entry name" value="TFP_snake_toxin"/>
    <property type="match status" value="1"/>
</dbReference>
<dbReference type="Gene3D" id="2.10.60.10">
    <property type="entry name" value="CD59"/>
    <property type="match status" value="1"/>
</dbReference>
<dbReference type="InterPro" id="IPR003571">
    <property type="entry name" value="Snake_3FTx"/>
</dbReference>
<dbReference type="InterPro" id="IPR045860">
    <property type="entry name" value="Snake_toxin-like_sf"/>
</dbReference>
<dbReference type="InterPro" id="IPR018354">
    <property type="entry name" value="Snake_toxin_con_site"/>
</dbReference>
<dbReference type="InterPro" id="IPR054131">
    <property type="entry name" value="Toxin_cobra-type"/>
</dbReference>
<dbReference type="Pfam" id="PF21947">
    <property type="entry name" value="Toxin_cobra-type"/>
    <property type="match status" value="1"/>
</dbReference>
<dbReference type="SUPFAM" id="SSF57302">
    <property type="entry name" value="Snake toxin-like"/>
    <property type="match status" value="1"/>
</dbReference>
<dbReference type="PROSITE" id="PS00272">
    <property type="entry name" value="SNAKE_TOXIN"/>
    <property type="match status" value="1"/>
</dbReference>
<reference key="1">
    <citation type="journal article" date="1982" name="Biochem. J.">
        <title>Amino acid sequences of two novel long-chain neurotoxins from the venom of the sea snake Laticauda colubrina.</title>
        <authorList>
            <person name="Kim H.S."/>
            <person name="Tamiya N."/>
        </authorList>
    </citation>
    <scope>PROTEIN SEQUENCE</scope>
    <scope>TOXIC DOSE</scope>
    <scope>SUBCELLULAR LOCATION</scope>
    <source>
        <strain>Philippines</strain>
        <tissue>Venom</tissue>
    </source>
</reference>
<feature type="chain" id="PRO_0000364185" description="Toxin Lc b">
    <location>
        <begin position="1"/>
        <end position="69"/>
    </location>
</feature>
<feature type="disulfide bond" evidence="1">
    <location>
        <begin position="3"/>
        <end position="20"/>
    </location>
</feature>
<feature type="disulfide bond" evidence="1">
    <location>
        <begin position="13"/>
        <end position="41"/>
    </location>
</feature>
<feature type="disulfide bond" evidence="1">
    <location>
        <begin position="45"/>
        <end position="56"/>
    </location>
</feature>
<feature type="disulfide bond" evidence="1">
    <location>
        <begin position="57"/>
        <end position="62"/>
    </location>
</feature>
<organism>
    <name type="scientific">Laticauda colubrina</name>
    <name type="common">Yellow-lipped sea krait</name>
    <name type="synonym">Banded sea krait</name>
    <dbReference type="NCBI Taxonomy" id="8628"/>
    <lineage>
        <taxon>Eukaryota</taxon>
        <taxon>Metazoa</taxon>
        <taxon>Chordata</taxon>
        <taxon>Craniata</taxon>
        <taxon>Vertebrata</taxon>
        <taxon>Euteleostomi</taxon>
        <taxon>Lepidosauria</taxon>
        <taxon>Squamata</taxon>
        <taxon>Bifurcata</taxon>
        <taxon>Unidentata</taxon>
        <taxon>Episquamata</taxon>
        <taxon>Toxicofera</taxon>
        <taxon>Serpentes</taxon>
        <taxon>Colubroidea</taxon>
        <taxon>Elapidae</taxon>
        <taxon>Laticaudinae</taxon>
        <taxon>Laticauda</taxon>
    </lineage>
</organism>